<dbReference type="EC" id="3.6.5.-" evidence="1"/>
<dbReference type="EMBL" id="CP001391">
    <property type="protein sequence ID" value="ACN95077.1"/>
    <property type="molecule type" value="Genomic_DNA"/>
</dbReference>
<dbReference type="SMR" id="C0R5N5"/>
<dbReference type="STRING" id="66084.WRi_002520"/>
<dbReference type="KEGG" id="wri:WRi_002520"/>
<dbReference type="HOGENOM" id="CLU_011747_2_0_5"/>
<dbReference type="Proteomes" id="UP000001293">
    <property type="component" value="Chromosome"/>
</dbReference>
<dbReference type="GO" id="GO:0005737">
    <property type="term" value="C:cytoplasm"/>
    <property type="evidence" value="ECO:0007669"/>
    <property type="project" value="UniProtKB-SubCell"/>
</dbReference>
<dbReference type="GO" id="GO:0005525">
    <property type="term" value="F:GTP binding"/>
    <property type="evidence" value="ECO:0007669"/>
    <property type="project" value="UniProtKB-UniRule"/>
</dbReference>
<dbReference type="GO" id="GO:0003924">
    <property type="term" value="F:GTPase activity"/>
    <property type="evidence" value="ECO:0007669"/>
    <property type="project" value="UniProtKB-UniRule"/>
</dbReference>
<dbReference type="GO" id="GO:0000287">
    <property type="term" value="F:magnesium ion binding"/>
    <property type="evidence" value="ECO:0007669"/>
    <property type="project" value="InterPro"/>
</dbReference>
<dbReference type="GO" id="GO:0042254">
    <property type="term" value="P:ribosome biogenesis"/>
    <property type="evidence" value="ECO:0007669"/>
    <property type="project" value="UniProtKB-UniRule"/>
</dbReference>
<dbReference type="CDD" id="cd01898">
    <property type="entry name" value="Obg"/>
    <property type="match status" value="1"/>
</dbReference>
<dbReference type="FunFam" id="2.70.210.12:FF:000001">
    <property type="entry name" value="GTPase Obg"/>
    <property type="match status" value="1"/>
</dbReference>
<dbReference type="Gene3D" id="2.70.210.12">
    <property type="entry name" value="GTP1/OBG domain"/>
    <property type="match status" value="1"/>
</dbReference>
<dbReference type="Gene3D" id="3.40.50.300">
    <property type="entry name" value="P-loop containing nucleotide triphosphate hydrolases"/>
    <property type="match status" value="1"/>
</dbReference>
<dbReference type="HAMAP" id="MF_01454">
    <property type="entry name" value="GTPase_Obg"/>
    <property type="match status" value="1"/>
</dbReference>
<dbReference type="InterPro" id="IPR031167">
    <property type="entry name" value="G_OBG"/>
</dbReference>
<dbReference type="InterPro" id="IPR006073">
    <property type="entry name" value="GTP-bd"/>
</dbReference>
<dbReference type="InterPro" id="IPR014100">
    <property type="entry name" value="GTP-bd_Obg/CgtA"/>
</dbReference>
<dbReference type="InterPro" id="IPR006169">
    <property type="entry name" value="GTP1_OBG_dom"/>
</dbReference>
<dbReference type="InterPro" id="IPR036726">
    <property type="entry name" value="GTP1_OBG_dom_sf"/>
</dbReference>
<dbReference type="InterPro" id="IPR045086">
    <property type="entry name" value="OBG_GTPase"/>
</dbReference>
<dbReference type="InterPro" id="IPR027417">
    <property type="entry name" value="P-loop_NTPase"/>
</dbReference>
<dbReference type="NCBIfam" id="TIGR02729">
    <property type="entry name" value="Obg_CgtA"/>
    <property type="match status" value="1"/>
</dbReference>
<dbReference type="NCBIfam" id="NF008955">
    <property type="entry name" value="PRK12297.1"/>
    <property type="match status" value="1"/>
</dbReference>
<dbReference type="NCBIfam" id="NF008956">
    <property type="entry name" value="PRK12299.1"/>
    <property type="match status" value="1"/>
</dbReference>
<dbReference type="PANTHER" id="PTHR11702">
    <property type="entry name" value="DEVELOPMENTALLY REGULATED GTP-BINDING PROTEIN-RELATED"/>
    <property type="match status" value="1"/>
</dbReference>
<dbReference type="PANTHER" id="PTHR11702:SF31">
    <property type="entry name" value="MITOCHONDRIAL RIBOSOME-ASSOCIATED GTPASE 2"/>
    <property type="match status" value="1"/>
</dbReference>
<dbReference type="Pfam" id="PF01018">
    <property type="entry name" value="GTP1_OBG"/>
    <property type="match status" value="1"/>
</dbReference>
<dbReference type="Pfam" id="PF01926">
    <property type="entry name" value="MMR_HSR1"/>
    <property type="match status" value="1"/>
</dbReference>
<dbReference type="PIRSF" id="PIRSF002401">
    <property type="entry name" value="GTP_bd_Obg/CgtA"/>
    <property type="match status" value="1"/>
</dbReference>
<dbReference type="PRINTS" id="PR00326">
    <property type="entry name" value="GTP1OBG"/>
</dbReference>
<dbReference type="SUPFAM" id="SSF82051">
    <property type="entry name" value="Obg GTP-binding protein N-terminal domain"/>
    <property type="match status" value="1"/>
</dbReference>
<dbReference type="SUPFAM" id="SSF52540">
    <property type="entry name" value="P-loop containing nucleoside triphosphate hydrolases"/>
    <property type="match status" value="1"/>
</dbReference>
<dbReference type="PROSITE" id="PS51710">
    <property type="entry name" value="G_OBG"/>
    <property type="match status" value="1"/>
</dbReference>
<dbReference type="PROSITE" id="PS51883">
    <property type="entry name" value="OBG"/>
    <property type="match status" value="1"/>
</dbReference>
<feature type="chain" id="PRO_0000386390" description="GTPase Obg">
    <location>
        <begin position="1"/>
        <end position="340"/>
    </location>
</feature>
<feature type="domain" description="Obg" evidence="2">
    <location>
        <begin position="1"/>
        <end position="159"/>
    </location>
</feature>
<feature type="domain" description="OBG-type G" evidence="1">
    <location>
        <begin position="160"/>
        <end position="329"/>
    </location>
</feature>
<feature type="binding site" evidence="1">
    <location>
        <begin position="166"/>
        <end position="173"/>
    </location>
    <ligand>
        <name>GTP</name>
        <dbReference type="ChEBI" id="CHEBI:37565"/>
    </ligand>
</feature>
<feature type="binding site" evidence="1">
    <location>
        <position position="173"/>
    </location>
    <ligand>
        <name>Mg(2+)</name>
        <dbReference type="ChEBI" id="CHEBI:18420"/>
    </ligand>
</feature>
<feature type="binding site" evidence="1">
    <location>
        <begin position="191"/>
        <end position="195"/>
    </location>
    <ligand>
        <name>GTP</name>
        <dbReference type="ChEBI" id="CHEBI:37565"/>
    </ligand>
</feature>
<feature type="binding site" evidence="1">
    <location>
        <position position="193"/>
    </location>
    <ligand>
        <name>Mg(2+)</name>
        <dbReference type="ChEBI" id="CHEBI:18420"/>
    </ligand>
</feature>
<feature type="binding site" evidence="1">
    <location>
        <begin position="212"/>
        <end position="215"/>
    </location>
    <ligand>
        <name>GTP</name>
        <dbReference type="ChEBI" id="CHEBI:37565"/>
    </ligand>
</feature>
<feature type="binding site" evidence="1">
    <location>
        <begin position="279"/>
        <end position="282"/>
    </location>
    <ligand>
        <name>GTP</name>
        <dbReference type="ChEBI" id="CHEBI:37565"/>
    </ligand>
</feature>
<feature type="binding site" evidence="1">
    <location>
        <begin position="310"/>
        <end position="312"/>
    </location>
    <ligand>
        <name>GTP</name>
        <dbReference type="ChEBI" id="CHEBI:37565"/>
    </ligand>
</feature>
<name>OBG_WOLWR</name>
<reference key="1">
    <citation type="journal article" date="2009" name="Proc. Natl. Acad. Sci. U.S.A.">
        <title>The mosaic genome structure of the Wolbachia wRi strain infecting Drosophila simulans.</title>
        <authorList>
            <person name="Klasson L."/>
            <person name="Westberg J."/>
            <person name="Sapountzis P."/>
            <person name="Naeslund K."/>
            <person name="Lutnaes Y."/>
            <person name="Darby A.C."/>
            <person name="Veneti Z."/>
            <person name="Chen L."/>
            <person name="Braig H.R."/>
            <person name="Garrett R."/>
            <person name="Bourtzis K."/>
            <person name="Andersson S.G."/>
        </authorList>
    </citation>
    <scope>NUCLEOTIDE SEQUENCE [LARGE SCALE GENOMIC DNA]</scope>
    <source>
        <strain>wRi</strain>
    </source>
</reference>
<protein>
    <recommendedName>
        <fullName evidence="1">GTPase Obg</fullName>
        <ecNumber evidence="1">3.6.5.-</ecNumber>
    </recommendedName>
    <alternativeName>
        <fullName evidence="1">GTP-binding protein Obg</fullName>
    </alternativeName>
</protein>
<organism>
    <name type="scientific">Wolbachia sp. subsp. Drosophila simulans (strain wRi)</name>
    <dbReference type="NCBI Taxonomy" id="66084"/>
    <lineage>
        <taxon>Bacteria</taxon>
        <taxon>Pseudomonadati</taxon>
        <taxon>Pseudomonadota</taxon>
        <taxon>Alphaproteobacteria</taxon>
        <taxon>Rickettsiales</taxon>
        <taxon>Anaplasmataceae</taxon>
        <taxon>Wolbachieae</taxon>
        <taxon>Wolbachia</taxon>
    </lineage>
</organism>
<keyword id="KW-0963">Cytoplasm</keyword>
<keyword id="KW-0342">GTP-binding</keyword>
<keyword id="KW-0378">Hydrolase</keyword>
<keyword id="KW-0460">Magnesium</keyword>
<keyword id="KW-0479">Metal-binding</keyword>
<keyword id="KW-0547">Nucleotide-binding</keyword>
<sequence length="340" mass="37204">MGFIDEVKLCLKAGDGGDGCASFRREKFVEFGGPNGGNGGKGGNIVFISDANLNTLLHFRYRRHIKADSGKNGAGRDRSGTAGKDVILKVPVGAQIIDEESEEIIVDLDKPGMEFQVAQGGKGGLGNTNFKSSTNKAPRHFTYGQPGEEKHVLLKLKVLSDVGIIGMPNAGKSKFLTRCSNSDTKVGDYPFTTVRPHLGMVKVDDSEVVIADIPGIITDAHLGVGLGHKFLKHIERCQILLHLIDVTHDDVVSAYSCIHNELELYNSDLVEKEEIVVLNKCDLLREAEILEKKNHLANYLNKEVLCLSINGDLQPILRLLSEKLKKSNSKEIDVYDPFKA</sequence>
<accession>C0R5N5</accession>
<comment type="function">
    <text evidence="1">An essential GTPase which binds GTP, GDP and possibly (p)ppGpp with moderate affinity, with high nucleotide exchange rates and a fairly low GTP hydrolysis rate. Plays a role in control of the cell cycle, stress response, ribosome biogenesis and in those bacteria that undergo differentiation, in morphogenesis control.</text>
</comment>
<comment type="cofactor">
    <cofactor evidence="1">
        <name>Mg(2+)</name>
        <dbReference type="ChEBI" id="CHEBI:18420"/>
    </cofactor>
</comment>
<comment type="subunit">
    <text evidence="1">Monomer.</text>
</comment>
<comment type="subcellular location">
    <subcellularLocation>
        <location evidence="1">Cytoplasm</location>
    </subcellularLocation>
</comment>
<comment type="similarity">
    <text evidence="1">Belongs to the TRAFAC class OBG-HflX-like GTPase superfamily. OBG GTPase family.</text>
</comment>
<proteinExistence type="inferred from homology"/>
<evidence type="ECO:0000255" key="1">
    <source>
        <dbReference type="HAMAP-Rule" id="MF_01454"/>
    </source>
</evidence>
<evidence type="ECO:0000255" key="2">
    <source>
        <dbReference type="PROSITE-ProRule" id="PRU01231"/>
    </source>
</evidence>
<gene>
    <name evidence="1" type="primary">obg</name>
    <name type="ordered locus">WRi_002520</name>
</gene>